<proteinExistence type="predicted"/>
<accession>Q08321</accession>
<accession>A0A1S0T0B0</accession>
<organism>
    <name type="scientific">Saccharomyces cerevisiae (strain ATCC 204508 / S288c)</name>
    <name type="common">Baker's yeast</name>
    <dbReference type="NCBI Taxonomy" id="559292"/>
    <lineage>
        <taxon>Eukaryota</taxon>
        <taxon>Fungi</taxon>
        <taxon>Dikarya</taxon>
        <taxon>Ascomycota</taxon>
        <taxon>Saccharomycotina</taxon>
        <taxon>Saccharomycetes</taxon>
        <taxon>Saccharomycetales</taxon>
        <taxon>Saccharomycetaceae</taxon>
        <taxon>Saccharomyces</taxon>
    </lineage>
</organism>
<gene>
    <name type="ordered locus">YOL160W</name>
    <name type="ORF">O0250</name>
</gene>
<name>YO160_YEAST</name>
<dbReference type="EMBL" id="AY693271">
    <property type="protein sequence ID" value="AAT93290.1"/>
    <property type="molecule type" value="Genomic_DNA"/>
</dbReference>
<dbReference type="EMBL" id="Z74902">
    <property type="protein sequence ID" value="CAA99182.1"/>
    <property type="molecule type" value="Genomic_DNA"/>
</dbReference>
<dbReference type="EMBL" id="BK006948">
    <property type="protein sequence ID" value="DAA80331.1"/>
    <property type="molecule type" value="Genomic_DNA"/>
</dbReference>
<dbReference type="PIR" id="S66859">
    <property type="entry name" value="S66859"/>
</dbReference>
<dbReference type="RefSeq" id="NP_001335811.1">
    <property type="nucleotide sequence ID" value="NM_001348873.1"/>
</dbReference>
<dbReference type="FunCoup" id="Q08321">
    <property type="interactions" value="25"/>
</dbReference>
<dbReference type="IntAct" id="Q08321">
    <property type="interactions" value="1"/>
</dbReference>
<dbReference type="STRING" id="4932.YOL160W"/>
<dbReference type="iPTMnet" id="Q08321"/>
<dbReference type="PaxDb" id="4932-YOL160W"/>
<dbReference type="EnsemblFungi" id="YOL160W_mRNA">
    <property type="protein sequence ID" value="YOL160W"/>
    <property type="gene ID" value="YOL160W"/>
</dbReference>
<dbReference type="GeneID" id="854004"/>
<dbReference type="AGR" id="SGD:S000005520"/>
<dbReference type="SGD" id="S000005520">
    <property type="gene designation" value="YOL160W"/>
</dbReference>
<dbReference type="HOGENOM" id="CLU_148218_0_0_1"/>
<dbReference type="InParanoid" id="Q08321"/>
<dbReference type="OrthoDB" id="10420266at2759"/>
<dbReference type="PRO" id="PR:Q08321"/>
<dbReference type="Proteomes" id="UP000002311">
    <property type="component" value="Chromosome XV"/>
</dbReference>
<dbReference type="RNAct" id="Q08321">
    <property type="molecule type" value="protein"/>
</dbReference>
<protein>
    <recommendedName>
        <fullName>Uncharacterized protein YOL160W</fullName>
    </recommendedName>
</protein>
<sequence length="113" mass="13497">MENIAFICLQSCTRGIYGCQFYSATLENYHNISFPIFLLQTTLFNHCISLNWSKAVFNRIKRRKYMMELKKHCYNYQVSRIGNRKKNGCFFLKMANNRVFSVKNSPRLLLFFI</sequence>
<keyword id="KW-1185">Reference proteome</keyword>
<feature type="chain" id="PRO_0000299698" description="Uncharacterized protein YOL160W">
    <location>
        <begin position="1"/>
        <end position="113"/>
    </location>
</feature>
<reference key="1">
    <citation type="journal article" date="1997" name="Nature">
        <title>The nucleotide sequence of Saccharomyces cerevisiae chromosome XV.</title>
        <authorList>
            <person name="Dujon B."/>
            <person name="Albermann K."/>
            <person name="Aldea M."/>
            <person name="Alexandraki D."/>
            <person name="Ansorge W."/>
            <person name="Arino J."/>
            <person name="Benes V."/>
            <person name="Bohn C."/>
            <person name="Bolotin-Fukuhara M."/>
            <person name="Bordonne R."/>
            <person name="Boyer J."/>
            <person name="Camasses A."/>
            <person name="Casamayor A."/>
            <person name="Casas C."/>
            <person name="Cheret G."/>
            <person name="Cziepluch C."/>
            <person name="Daignan-Fornier B."/>
            <person name="Dang V.-D."/>
            <person name="de Haan M."/>
            <person name="Delius H."/>
            <person name="Durand P."/>
            <person name="Fairhead C."/>
            <person name="Feldmann H."/>
            <person name="Gaillon L."/>
            <person name="Galisson F."/>
            <person name="Gamo F.-J."/>
            <person name="Gancedo C."/>
            <person name="Goffeau A."/>
            <person name="Goulding S.E."/>
            <person name="Grivell L.A."/>
            <person name="Habbig B."/>
            <person name="Hand N.J."/>
            <person name="Hani J."/>
            <person name="Hattenhorst U."/>
            <person name="Hebling U."/>
            <person name="Hernando Y."/>
            <person name="Herrero E."/>
            <person name="Heumann K."/>
            <person name="Hiesel R."/>
            <person name="Hilger F."/>
            <person name="Hofmann B."/>
            <person name="Hollenberg C.P."/>
            <person name="Hughes B."/>
            <person name="Jauniaux J.-C."/>
            <person name="Kalogeropoulos A."/>
            <person name="Katsoulou C."/>
            <person name="Kordes E."/>
            <person name="Lafuente M.J."/>
            <person name="Landt O."/>
            <person name="Louis E.J."/>
            <person name="Maarse A.C."/>
            <person name="Madania A."/>
            <person name="Mannhaupt G."/>
            <person name="Marck C."/>
            <person name="Martin R.P."/>
            <person name="Mewes H.-W."/>
            <person name="Michaux G."/>
            <person name="Paces V."/>
            <person name="Parle-McDermott A.G."/>
            <person name="Pearson B.M."/>
            <person name="Perrin A."/>
            <person name="Pettersson B."/>
            <person name="Poch O."/>
            <person name="Pohl T.M."/>
            <person name="Poirey R."/>
            <person name="Portetelle D."/>
            <person name="Pujol A."/>
            <person name="Purnelle B."/>
            <person name="Ramezani Rad M."/>
            <person name="Rechmann S."/>
            <person name="Schwager C."/>
            <person name="Schweizer M."/>
            <person name="Sor F."/>
            <person name="Sterky F."/>
            <person name="Tarassov I.A."/>
            <person name="Teodoru C."/>
            <person name="Tettelin H."/>
            <person name="Thierry A."/>
            <person name="Tobiasch E."/>
            <person name="Tzermia M."/>
            <person name="Uhlen M."/>
            <person name="Unseld M."/>
            <person name="Valens M."/>
            <person name="Vandenbol M."/>
            <person name="Vetter I."/>
            <person name="Vlcek C."/>
            <person name="Voet M."/>
            <person name="Volckaert G."/>
            <person name="Voss H."/>
            <person name="Wambutt R."/>
            <person name="Wedler H."/>
            <person name="Wiemann S."/>
            <person name="Winsor B."/>
            <person name="Wolfe K.H."/>
            <person name="Zollner A."/>
            <person name="Zumstein E."/>
            <person name="Kleine K."/>
        </authorList>
    </citation>
    <scope>NUCLEOTIDE SEQUENCE [LARGE SCALE GENOMIC DNA]</scope>
    <source>
        <strain>ATCC 204508 / S288c</strain>
    </source>
</reference>
<reference key="2">
    <citation type="journal article" date="2014" name="G3 (Bethesda)">
        <title>The reference genome sequence of Saccharomyces cerevisiae: Then and now.</title>
        <authorList>
            <person name="Engel S.R."/>
            <person name="Dietrich F.S."/>
            <person name="Fisk D.G."/>
            <person name="Binkley G."/>
            <person name="Balakrishnan R."/>
            <person name="Costanzo M.C."/>
            <person name="Dwight S.S."/>
            <person name="Hitz B.C."/>
            <person name="Karra K."/>
            <person name="Nash R.S."/>
            <person name="Weng S."/>
            <person name="Wong E.D."/>
            <person name="Lloyd P."/>
            <person name="Skrzypek M.S."/>
            <person name="Miyasato S.R."/>
            <person name="Simison M."/>
            <person name="Cherry J.M."/>
        </authorList>
    </citation>
    <scope>GENOME REANNOTATION</scope>
    <source>
        <strain>ATCC 204508 / S288c</strain>
    </source>
</reference>
<reference key="3">
    <citation type="journal article" date="2007" name="Genome Res.">
        <title>Approaching a complete repository of sequence-verified protein-encoding clones for Saccharomyces cerevisiae.</title>
        <authorList>
            <person name="Hu Y."/>
            <person name="Rolfs A."/>
            <person name="Bhullar B."/>
            <person name="Murthy T.V.S."/>
            <person name="Zhu C."/>
            <person name="Berger M.F."/>
            <person name="Camargo A.A."/>
            <person name="Kelley F."/>
            <person name="McCarron S."/>
            <person name="Jepson D."/>
            <person name="Richardson A."/>
            <person name="Raphael J."/>
            <person name="Moreira D."/>
            <person name="Taycher E."/>
            <person name="Zuo D."/>
            <person name="Mohr S."/>
            <person name="Kane M.F."/>
            <person name="Williamson J."/>
            <person name="Simpson A.J.G."/>
            <person name="Bulyk M.L."/>
            <person name="Harlow E."/>
            <person name="Marsischky G."/>
            <person name="Kolodner R.D."/>
            <person name="LaBaer J."/>
        </authorList>
    </citation>
    <scope>NUCLEOTIDE SEQUENCE [GENOMIC DNA]</scope>
    <source>
        <strain>ATCC 204508 / S288c</strain>
    </source>
</reference>